<comment type="similarity">
    <text evidence="1">Belongs to the SlyX family.</text>
</comment>
<organism>
    <name type="scientific">Pseudomonas fluorescens (strain ATCC BAA-477 / NRRL B-23932 / Pf-5)</name>
    <dbReference type="NCBI Taxonomy" id="220664"/>
    <lineage>
        <taxon>Bacteria</taxon>
        <taxon>Pseudomonadati</taxon>
        <taxon>Pseudomonadota</taxon>
        <taxon>Gammaproteobacteria</taxon>
        <taxon>Pseudomonadales</taxon>
        <taxon>Pseudomonadaceae</taxon>
        <taxon>Pseudomonas</taxon>
    </lineage>
</organism>
<accession>Q4K7D1</accession>
<name>SLYX_PSEF5</name>
<protein>
    <recommendedName>
        <fullName evidence="1">Protein SlyX homolog</fullName>
    </recommendedName>
</protein>
<sequence>MSLQERVTDLESRLAFQDDTIQALNDVLVAQQRAVERLQLQMAALLKRQEEMVGQFESFEEEAPPPHY</sequence>
<feature type="chain" id="PRO_0000227074" description="Protein SlyX homolog">
    <location>
        <begin position="1"/>
        <end position="68"/>
    </location>
</feature>
<reference key="1">
    <citation type="journal article" date="2005" name="Nat. Biotechnol.">
        <title>Complete genome sequence of the plant commensal Pseudomonas fluorescens Pf-5.</title>
        <authorList>
            <person name="Paulsen I.T."/>
            <person name="Press C.M."/>
            <person name="Ravel J."/>
            <person name="Kobayashi D.Y."/>
            <person name="Myers G.S.A."/>
            <person name="Mavrodi D.V."/>
            <person name="DeBoy R.T."/>
            <person name="Seshadri R."/>
            <person name="Ren Q."/>
            <person name="Madupu R."/>
            <person name="Dodson R.J."/>
            <person name="Durkin A.S."/>
            <person name="Brinkac L.M."/>
            <person name="Daugherty S.C."/>
            <person name="Sullivan S.A."/>
            <person name="Rosovitz M.J."/>
            <person name="Gwinn M.L."/>
            <person name="Zhou L."/>
            <person name="Schneider D.J."/>
            <person name="Cartinhour S.W."/>
            <person name="Nelson W.C."/>
            <person name="Weidman J."/>
            <person name="Watkins K."/>
            <person name="Tran K."/>
            <person name="Khouri H."/>
            <person name="Pierson E.A."/>
            <person name="Pierson L.S. III"/>
            <person name="Thomashow L.S."/>
            <person name="Loper J.E."/>
        </authorList>
    </citation>
    <scope>NUCLEOTIDE SEQUENCE [LARGE SCALE GENOMIC DNA]</scope>
    <source>
        <strain>ATCC BAA-477 / NRRL B-23932 / Pf-5</strain>
    </source>
</reference>
<dbReference type="EMBL" id="CP000076">
    <property type="protein sequence ID" value="AAY94001.1"/>
    <property type="molecule type" value="Genomic_DNA"/>
</dbReference>
<dbReference type="RefSeq" id="WP_011063025.1">
    <property type="nucleotide sequence ID" value="NC_004129.6"/>
</dbReference>
<dbReference type="SMR" id="Q4K7D1"/>
<dbReference type="STRING" id="220664.PFL_4771"/>
<dbReference type="KEGG" id="pfl:PFL_4771"/>
<dbReference type="PATRIC" id="fig|220664.5.peg.4882"/>
<dbReference type="eggNOG" id="COG2900">
    <property type="taxonomic scope" value="Bacteria"/>
</dbReference>
<dbReference type="HOGENOM" id="CLU_180796_4_1_6"/>
<dbReference type="Proteomes" id="UP000008540">
    <property type="component" value="Chromosome"/>
</dbReference>
<dbReference type="Gene3D" id="1.20.5.300">
    <property type="match status" value="1"/>
</dbReference>
<dbReference type="HAMAP" id="MF_00715">
    <property type="entry name" value="SlyX"/>
    <property type="match status" value="1"/>
</dbReference>
<dbReference type="InterPro" id="IPR007236">
    <property type="entry name" value="SlyX"/>
</dbReference>
<dbReference type="NCBIfam" id="NF001421">
    <property type="entry name" value="PRK00295.1"/>
    <property type="match status" value="1"/>
</dbReference>
<dbReference type="PANTHER" id="PTHR36508">
    <property type="entry name" value="PROTEIN SLYX"/>
    <property type="match status" value="1"/>
</dbReference>
<dbReference type="PANTHER" id="PTHR36508:SF1">
    <property type="entry name" value="PROTEIN SLYX"/>
    <property type="match status" value="1"/>
</dbReference>
<dbReference type="Pfam" id="PF04102">
    <property type="entry name" value="SlyX"/>
    <property type="match status" value="1"/>
</dbReference>
<evidence type="ECO:0000255" key="1">
    <source>
        <dbReference type="HAMAP-Rule" id="MF_00715"/>
    </source>
</evidence>
<gene>
    <name evidence="1" type="primary">slyX</name>
    <name type="ordered locus">PFL_4771</name>
</gene>
<proteinExistence type="inferred from homology"/>